<accession>Q9Z2C6</accession>
<accession>Q8C448</accession>
<accession>Q8K4M0</accession>
<reference key="1">
    <citation type="submission" date="2000-06" db="EMBL/GenBank/DDBJ databases">
        <title>Mouse uroplakin Ib (UPIb) mRNA.</title>
        <authorList>
            <person name="Zhou G."/>
            <person name="Kong X.-P."/>
        </authorList>
    </citation>
    <scope>NUCLEOTIDE SEQUENCE [MRNA]</scope>
    <source>
        <tissue>Urinary bladder</tissue>
    </source>
</reference>
<reference key="2">
    <citation type="journal article" date="2005" name="Science">
        <title>The transcriptional landscape of the mammalian genome.</title>
        <authorList>
            <person name="Carninci P."/>
            <person name="Kasukawa T."/>
            <person name="Katayama S."/>
            <person name="Gough J."/>
            <person name="Frith M.C."/>
            <person name="Maeda N."/>
            <person name="Oyama R."/>
            <person name="Ravasi T."/>
            <person name="Lenhard B."/>
            <person name="Wells C."/>
            <person name="Kodzius R."/>
            <person name="Shimokawa K."/>
            <person name="Bajic V.B."/>
            <person name="Brenner S.E."/>
            <person name="Batalov S."/>
            <person name="Forrest A.R."/>
            <person name="Zavolan M."/>
            <person name="Davis M.J."/>
            <person name="Wilming L.G."/>
            <person name="Aidinis V."/>
            <person name="Allen J.E."/>
            <person name="Ambesi-Impiombato A."/>
            <person name="Apweiler R."/>
            <person name="Aturaliya R.N."/>
            <person name="Bailey T.L."/>
            <person name="Bansal M."/>
            <person name="Baxter L."/>
            <person name="Beisel K.W."/>
            <person name="Bersano T."/>
            <person name="Bono H."/>
            <person name="Chalk A.M."/>
            <person name="Chiu K.P."/>
            <person name="Choudhary V."/>
            <person name="Christoffels A."/>
            <person name="Clutterbuck D.R."/>
            <person name="Crowe M.L."/>
            <person name="Dalla E."/>
            <person name="Dalrymple B.P."/>
            <person name="de Bono B."/>
            <person name="Della Gatta G."/>
            <person name="di Bernardo D."/>
            <person name="Down T."/>
            <person name="Engstrom P."/>
            <person name="Fagiolini M."/>
            <person name="Faulkner G."/>
            <person name="Fletcher C.F."/>
            <person name="Fukushima T."/>
            <person name="Furuno M."/>
            <person name="Futaki S."/>
            <person name="Gariboldi M."/>
            <person name="Georgii-Hemming P."/>
            <person name="Gingeras T.R."/>
            <person name="Gojobori T."/>
            <person name="Green R.E."/>
            <person name="Gustincich S."/>
            <person name="Harbers M."/>
            <person name="Hayashi Y."/>
            <person name="Hensch T.K."/>
            <person name="Hirokawa N."/>
            <person name="Hill D."/>
            <person name="Huminiecki L."/>
            <person name="Iacono M."/>
            <person name="Ikeo K."/>
            <person name="Iwama A."/>
            <person name="Ishikawa T."/>
            <person name="Jakt M."/>
            <person name="Kanapin A."/>
            <person name="Katoh M."/>
            <person name="Kawasawa Y."/>
            <person name="Kelso J."/>
            <person name="Kitamura H."/>
            <person name="Kitano H."/>
            <person name="Kollias G."/>
            <person name="Krishnan S.P."/>
            <person name="Kruger A."/>
            <person name="Kummerfeld S.K."/>
            <person name="Kurochkin I.V."/>
            <person name="Lareau L.F."/>
            <person name="Lazarevic D."/>
            <person name="Lipovich L."/>
            <person name="Liu J."/>
            <person name="Liuni S."/>
            <person name="McWilliam S."/>
            <person name="Madan Babu M."/>
            <person name="Madera M."/>
            <person name="Marchionni L."/>
            <person name="Matsuda H."/>
            <person name="Matsuzawa S."/>
            <person name="Miki H."/>
            <person name="Mignone F."/>
            <person name="Miyake S."/>
            <person name="Morris K."/>
            <person name="Mottagui-Tabar S."/>
            <person name="Mulder N."/>
            <person name="Nakano N."/>
            <person name="Nakauchi H."/>
            <person name="Ng P."/>
            <person name="Nilsson R."/>
            <person name="Nishiguchi S."/>
            <person name="Nishikawa S."/>
            <person name="Nori F."/>
            <person name="Ohara O."/>
            <person name="Okazaki Y."/>
            <person name="Orlando V."/>
            <person name="Pang K.C."/>
            <person name="Pavan W.J."/>
            <person name="Pavesi G."/>
            <person name="Pesole G."/>
            <person name="Petrovsky N."/>
            <person name="Piazza S."/>
            <person name="Reed J."/>
            <person name="Reid J.F."/>
            <person name="Ring B.Z."/>
            <person name="Ringwald M."/>
            <person name="Rost B."/>
            <person name="Ruan Y."/>
            <person name="Salzberg S.L."/>
            <person name="Sandelin A."/>
            <person name="Schneider C."/>
            <person name="Schoenbach C."/>
            <person name="Sekiguchi K."/>
            <person name="Semple C.A."/>
            <person name="Seno S."/>
            <person name="Sessa L."/>
            <person name="Sheng Y."/>
            <person name="Shibata Y."/>
            <person name="Shimada H."/>
            <person name="Shimada K."/>
            <person name="Silva D."/>
            <person name="Sinclair B."/>
            <person name="Sperling S."/>
            <person name="Stupka E."/>
            <person name="Sugiura K."/>
            <person name="Sultana R."/>
            <person name="Takenaka Y."/>
            <person name="Taki K."/>
            <person name="Tammoja K."/>
            <person name="Tan S.L."/>
            <person name="Tang S."/>
            <person name="Taylor M.S."/>
            <person name="Tegner J."/>
            <person name="Teichmann S.A."/>
            <person name="Ueda H.R."/>
            <person name="van Nimwegen E."/>
            <person name="Verardo R."/>
            <person name="Wei C.L."/>
            <person name="Yagi K."/>
            <person name="Yamanishi H."/>
            <person name="Zabarovsky E."/>
            <person name="Zhu S."/>
            <person name="Zimmer A."/>
            <person name="Hide W."/>
            <person name="Bult C."/>
            <person name="Grimmond S.M."/>
            <person name="Teasdale R.D."/>
            <person name="Liu E.T."/>
            <person name="Brusic V."/>
            <person name="Quackenbush J."/>
            <person name="Wahlestedt C."/>
            <person name="Mattick J.S."/>
            <person name="Hume D.A."/>
            <person name="Kai C."/>
            <person name="Sasaki D."/>
            <person name="Tomaru Y."/>
            <person name="Fukuda S."/>
            <person name="Kanamori-Katayama M."/>
            <person name="Suzuki M."/>
            <person name="Aoki J."/>
            <person name="Arakawa T."/>
            <person name="Iida J."/>
            <person name="Imamura K."/>
            <person name="Itoh M."/>
            <person name="Kato T."/>
            <person name="Kawaji H."/>
            <person name="Kawagashira N."/>
            <person name="Kawashima T."/>
            <person name="Kojima M."/>
            <person name="Kondo S."/>
            <person name="Konno H."/>
            <person name="Nakano K."/>
            <person name="Ninomiya N."/>
            <person name="Nishio T."/>
            <person name="Okada M."/>
            <person name="Plessy C."/>
            <person name="Shibata K."/>
            <person name="Shiraki T."/>
            <person name="Suzuki S."/>
            <person name="Tagami M."/>
            <person name="Waki K."/>
            <person name="Watahiki A."/>
            <person name="Okamura-Oho Y."/>
            <person name="Suzuki H."/>
            <person name="Kawai J."/>
            <person name="Hayashizaki Y."/>
        </authorList>
    </citation>
    <scope>NUCLEOTIDE SEQUENCE [LARGE SCALE MRNA]</scope>
    <source>
        <strain>C57BL/6J</strain>
        <tissue>Head</tissue>
        <tissue>Hippocampus</tissue>
        <tissue>Lung</tissue>
    </source>
</reference>
<reference key="3">
    <citation type="journal article" date="2004" name="Genome Res.">
        <title>The status, quality, and expansion of the NIH full-length cDNA project: the Mammalian Gene Collection (MGC).</title>
        <authorList>
            <consortium name="The MGC Project Team"/>
        </authorList>
    </citation>
    <scope>NUCLEOTIDE SEQUENCE [LARGE SCALE MRNA]</scope>
    <source>
        <tissue>Olfactory epithelium</tissue>
    </source>
</reference>
<reference key="4">
    <citation type="journal article" date="1999" name="Cytogenet. Cell Genet.">
        <title>Assignment of the Uroplakin 1b (Upk1b) gene to mouse chromosome 16 bands B5-C2 by in situ hybridization.</title>
        <authorList>
            <person name="Webb G.C."/>
            <person name="Finch J.L."/>
            <person name="Cowled P.A."/>
        </authorList>
    </citation>
    <scope>NUCLEOTIDE SEQUENCE [GENOMIC DNA] OF 102-141</scope>
</reference>
<comment type="function">
    <text evidence="1">Component of the asymmetric unit membrane (AUM); a highly specialized biomembrane elaborated by terminally differentiated urothelial cells. May play an important role in normal bladder epithelial physiology, possibly in regulating membrane permeability of superficial umbrella cells or in stabilizing the apical membrane through AUM/cytoskeletal interactions (By similarity).</text>
</comment>
<comment type="subunit">
    <text evidence="1">Heterodimer with uroplakin-3A (UPK3A) or uroplakin-3B (UPK3B).</text>
</comment>
<comment type="subcellular location">
    <subcellularLocation>
        <location>Membrane</location>
        <topology>Multi-pass membrane protein</topology>
    </subcellularLocation>
</comment>
<comment type="tissue specificity">
    <text>Bladder epithelium.</text>
</comment>
<comment type="PTM">
    <text evidence="1">N-glycosylated with high-mannose oligosaccharides.</text>
</comment>
<comment type="similarity">
    <text evidence="3">Belongs to the tetraspanin (TM4SF) family.</text>
</comment>
<proteinExistence type="evidence at transcript level"/>
<keyword id="KW-0325">Glycoprotein</keyword>
<keyword id="KW-0472">Membrane</keyword>
<keyword id="KW-1185">Reference proteome</keyword>
<keyword id="KW-0812">Transmembrane</keyword>
<keyword id="KW-1133">Transmembrane helix</keyword>
<organism>
    <name type="scientific">Mus musculus</name>
    <name type="common">Mouse</name>
    <dbReference type="NCBI Taxonomy" id="10090"/>
    <lineage>
        <taxon>Eukaryota</taxon>
        <taxon>Metazoa</taxon>
        <taxon>Chordata</taxon>
        <taxon>Craniata</taxon>
        <taxon>Vertebrata</taxon>
        <taxon>Euteleostomi</taxon>
        <taxon>Mammalia</taxon>
        <taxon>Eutheria</taxon>
        <taxon>Euarchontoglires</taxon>
        <taxon>Glires</taxon>
        <taxon>Rodentia</taxon>
        <taxon>Myomorpha</taxon>
        <taxon>Muroidea</taxon>
        <taxon>Muridae</taxon>
        <taxon>Murinae</taxon>
        <taxon>Mus</taxon>
        <taxon>Mus</taxon>
    </lineage>
</organism>
<name>UPK1B_MOUSE</name>
<feature type="chain" id="PRO_0000219290" description="Uroplakin-1b">
    <location>
        <begin position="1"/>
        <end position="260"/>
    </location>
</feature>
<feature type="topological domain" description="Cytoplasmic" evidence="2">
    <location>
        <begin position="1"/>
        <end position="15"/>
    </location>
</feature>
<feature type="transmembrane region" description="Helical" evidence="2">
    <location>
        <begin position="16"/>
        <end position="36"/>
    </location>
</feature>
<feature type="topological domain" description="Extracellular" evidence="2">
    <location>
        <begin position="37"/>
        <end position="59"/>
    </location>
</feature>
<feature type="transmembrane region" description="Helical" evidence="2">
    <location>
        <begin position="60"/>
        <end position="80"/>
    </location>
</feature>
<feature type="topological domain" description="Cytoplasmic" evidence="2">
    <location>
        <begin position="81"/>
        <end position="86"/>
    </location>
</feature>
<feature type="transmembrane region" description="Helical" evidence="2">
    <location>
        <begin position="87"/>
        <end position="107"/>
    </location>
</feature>
<feature type="topological domain" description="Extracellular" evidence="2">
    <location>
        <begin position="108"/>
        <end position="229"/>
    </location>
</feature>
<feature type="transmembrane region" description="Helical" evidence="2">
    <location>
        <begin position="230"/>
        <end position="250"/>
    </location>
</feature>
<feature type="topological domain" description="Cytoplasmic" evidence="2">
    <location>
        <begin position="251"/>
        <end position="260"/>
    </location>
</feature>
<feature type="sequence conflict" description="In Ref. 4; AAD02834." evidence="3" ref="4">
    <original>T</original>
    <variation>N</variation>
    <location>
        <position position="136"/>
    </location>
</feature>
<feature type="sequence conflict" description="In Ref. 4; AAD02834." evidence="3" ref="4">
    <original>E</original>
    <variation>Q</variation>
    <location>
        <position position="140"/>
    </location>
</feature>
<feature type="sequence conflict" description="In Ref. 2; BAC38760." evidence="3" ref="2">
    <original>F</original>
    <variation>L</variation>
    <location>
        <position position="253"/>
    </location>
</feature>
<gene>
    <name type="primary">Upk1b</name>
</gene>
<dbReference type="EMBL" id="AF274865">
    <property type="protein sequence ID" value="AAM97593.1"/>
    <property type="molecule type" value="mRNA"/>
</dbReference>
<dbReference type="EMBL" id="AK053004">
    <property type="protein sequence ID" value="BAC35237.1"/>
    <property type="molecule type" value="mRNA"/>
</dbReference>
<dbReference type="EMBL" id="AK083101">
    <property type="protein sequence ID" value="BAC38760.1"/>
    <property type="molecule type" value="mRNA"/>
</dbReference>
<dbReference type="EMBL" id="AK086926">
    <property type="protein sequence ID" value="BAC39763.1"/>
    <property type="molecule type" value="mRNA"/>
</dbReference>
<dbReference type="EMBL" id="BC046604">
    <property type="protein sequence ID" value="AAH46604.1"/>
    <property type="molecule type" value="mRNA"/>
</dbReference>
<dbReference type="EMBL" id="AF073956">
    <property type="protein sequence ID" value="AAD02834.1"/>
    <property type="molecule type" value="Genomic_DNA"/>
</dbReference>
<dbReference type="CCDS" id="CCDS28174.1"/>
<dbReference type="RefSeq" id="NP_849255.2">
    <property type="nucleotide sequence ID" value="NM_178924.4"/>
</dbReference>
<dbReference type="RefSeq" id="XP_017172432.1">
    <property type="nucleotide sequence ID" value="XM_017316943.2"/>
</dbReference>
<dbReference type="SMR" id="Q9Z2C6"/>
<dbReference type="FunCoup" id="Q9Z2C6">
    <property type="interactions" value="58"/>
</dbReference>
<dbReference type="IntAct" id="Q9Z2C6">
    <property type="interactions" value="2"/>
</dbReference>
<dbReference type="STRING" id="10090.ENSMUSP00000052469"/>
<dbReference type="PhosphoSitePlus" id="Q9Z2C6"/>
<dbReference type="SwissPalm" id="Q9Z2C6"/>
<dbReference type="PaxDb" id="10090-ENSMUSP00000052469"/>
<dbReference type="ProteomicsDB" id="297869"/>
<dbReference type="Antibodypedia" id="32685">
    <property type="antibodies" value="298 antibodies from 28 providers"/>
</dbReference>
<dbReference type="Ensembl" id="ENSMUST00000057767.6">
    <property type="protein sequence ID" value="ENSMUSP00000052469.5"/>
    <property type="gene ID" value="ENSMUSG00000049436.6"/>
</dbReference>
<dbReference type="GeneID" id="22268"/>
<dbReference type="KEGG" id="mmu:22268"/>
<dbReference type="UCSC" id="uc007zfm.2">
    <property type="organism name" value="mouse"/>
</dbReference>
<dbReference type="AGR" id="MGI:98912"/>
<dbReference type="CTD" id="7348"/>
<dbReference type="MGI" id="MGI:98912">
    <property type="gene designation" value="Upk1b"/>
</dbReference>
<dbReference type="VEuPathDB" id="HostDB:ENSMUSG00000049436"/>
<dbReference type="eggNOG" id="KOG3882">
    <property type="taxonomic scope" value="Eukaryota"/>
</dbReference>
<dbReference type="GeneTree" id="ENSGT00940000160779"/>
<dbReference type="HOGENOM" id="CLU_088971_1_0_1"/>
<dbReference type="InParanoid" id="Q9Z2C6"/>
<dbReference type="OMA" id="EKCCGVN"/>
<dbReference type="OrthoDB" id="5982705at2759"/>
<dbReference type="PhylomeDB" id="Q9Z2C6"/>
<dbReference type="TreeFam" id="TF335659"/>
<dbReference type="BioGRID-ORCS" id="22268">
    <property type="hits" value="4 hits in 77 CRISPR screens"/>
</dbReference>
<dbReference type="PRO" id="PR:Q9Z2C6"/>
<dbReference type="Proteomes" id="UP000000589">
    <property type="component" value="Chromosome 16"/>
</dbReference>
<dbReference type="RNAct" id="Q9Z2C6">
    <property type="molecule type" value="protein"/>
</dbReference>
<dbReference type="Bgee" id="ENSMUSG00000049436">
    <property type="expression patterns" value="Expressed in urinary bladder urothelium and 119 other cell types or tissues"/>
</dbReference>
<dbReference type="GO" id="GO:0016324">
    <property type="term" value="C:apical plasma membrane"/>
    <property type="evidence" value="ECO:0000314"/>
    <property type="project" value="MGI"/>
</dbReference>
<dbReference type="GO" id="GO:0120001">
    <property type="term" value="C:apical plasma membrane urothelial plaque"/>
    <property type="evidence" value="ECO:0000314"/>
    <property type="project" value="MGI"/>
</dbReference>
<dbReference type="GO" id="GO:0030855">
    <property type="term" value="P:epithelial cell differentiation"/>
    <property type="evidence" value="ECO:0007669"/>
    <property type="project" value="Ensembl"/>
</dbReference>
<dbReference type="GO" id="GO:0009617">
    <property type="term" value="P:response to bacterium"/>
    <property type="evidence" value="ECO:0000270"/>
    <property type="project" value="MGI"/>
</dbReference>
<dbReference type="CDD" id="cd03156">
    <property type="entry name" value="uroplakin_I_like_LEL"/>
    <property type="match status" value="1"/>
</dbReference>
<dbReference type="FunFam" id="1.10.1450.10:FF:000014">
    <property type="entry name" value="Tetraspanin"/>
    <property type="match status" value="1"/>
</dbReference>
<dbReference type="Gene3D" id="1.10.1450.10">
    <property type="entry name" value="Tetraspanin"/>
    <property type="match status" value="1"/>
</dbReference>
<dbReference type="InterPro" id="IPR018499">
    <property type="entry name" value="Tetraspanin/Peripherin"/>
</dbReference>
<dbReference type="InterPro" id="IPR008952">
    <property type="entry name" value="Tetraspanin_EC2_sf"/>
</dbReference>
<dbReference type="PANTHER" id="PTHR47110">
    <property type="entry name" value="TESTIS-SPECIFIC EXPRESSED PROTEIN 55"/>
    <property type="match status" value="1"/>
</dbReference>
<dbReference type="PANTHER" id="PTHR47110:SF2">
    <property type="entry name" value="UROPLAKIN-1B"/>
    <property type="match status" value="1"/>
</dbReference>
<dbReference type="Pfam" id="PF00335">
    <property type="entry name" value="Tetraspanin"/>
    <property type="match status" value="1"/>
</dbReference>
<dbReference type="SUPFAM" id="SSF48652">
    <property type="entry name" value="Tetraspanin"/>
    <property type="match status" value="1"/>
</dbReference>
<sequence>MAKDDSTVRCFQGLLIFGHVIVGMCGIALTAECIFFVSDQHSLYPLLEATNNDDIFGAAWIGMFVGICLFCLSVLAIVGIMKSNRKILLAYFIMMFIVYGFEVASCITAATQRDFFTTNLFLKQMLMRYQNNSPPTNDDEWKNNGVTKTWDRLMLQDHCCGVNGPSDWQKYTSAFRVENNDADYPWPRQCCVMDKLKEPLNLDACKLGVPGYYHSQGCYELISGPMDRHAWGVAWFGFAILCWTFWVLLGTMFYWSRIEY</sequence>
<protein>
    <recommendedName>
        <fullName>Uroplakin-1b</fullName>
        <shortName>UP1b</shortName>
    </recommendedName>
    <alternativeName>
        <fullName>Uroplakin Ib</fullName>
        <shortName>UPIb</shortName>
    </alternativeName>
</protein>
<evidence type="ECO:0000250" key="1"/>
<evidence type="ECO:0000255" key="2"/>
<evidence type="ECO:0000305" key="3"/>